<evidence type="ECO:0000255" key="1">
    <source>
        <dbReference type="HAMAP-Rule" id="MF_01874"/>
    </source>
</evidence>
<protein>
    <recommendedName>
        <fullName evidence="1">UPF0756 membrane protein Lm4b_01579</fullName>
    </recommendedName>
</protein>
<feature type="chain" id="PRO_0000388903" description="UPF0756 membrane protein Lm4b_01579">
    <location>
        <begin position="1"/>
        <end position="153"/>
    </location>
</feature>
<feature type="transmembrane region" description="Helical" evidence="1">
    <location>
        <begin position="6"/>
        <end position="26"/>
    </location>
</feature>
<feature type="transmembrane region" description="Helical" evidence="1">
    <location>
        <begin position="54"/>
        <end position="74"/>
    </location>
</feature>
<feature type="transmembrane region" description="Helical" evidence="1">
    <location>
        <begin position="80"/>
        <end position="100"/>
    </location>
</feature>
<feature type="transmembrane region" description="Helical" evidence="1">
    <location>
        <begin position="117"/>
        <end position="137"/>
    </location>
</feature>
<dbReference type="EMBL" id="FM242711">
    <property type="protein sequence ID" value="CAS05340.1"/>
    <property type="molecule type" value="Genomic_DNA"/>
</dbReference>
<dbReference type="RefSeq" id="WP_003725694.1">
    <property type="nucleotide sequence ID" value="NC_012488.1"/>
</dbReference>
<dbReference type="KEGG" id="lmc:Lm4b_01579"/>
<dbReference type="HOGENOM" id="CLU_125889_1_0_9"/>
<dbReference type="GO" id="GO:0005886">
    <property type="term" value="C:plasma membrane"/>
    <property type="evidence" value="ECO:0007669"/>
    <property type="project" value="UniProtKB-SubCell"/>
</dbReference>
<dbReference type="HAMAP" id="MF_01874">
    <property type="entry name" value="UPF0756"/>
    <property type="match status" value="1"/>
</dbReference>
<dbReference type="InterPro" id="IPR007382">
    <property type="entry name" value="UPF0756_TM"/>
</dbReference>
<dbReference type="PANTHER" id="PTHR38452">
    <property type="entry name" value="UPF0756 MEMBRANE PROTEIN YEAL"/>
    <property type="match status" value="1"/>
</dbReference>
<dbReference type="PANTHER" id="PTHR38452:SF1">
    <property type="entry name" value="UPF0756 MEMBRANE PROTEIN YEAL"/>
    <property type="match status" value="1"/>
</dbReference>
<dbReference type="Pfam" id="PF04284">
    <property type="entry name" value="DUF441"/>
    <property type="match status" value="1"/>
</dbReference>
<name>Y1579_LISMC</name>
<keyword id="KW-1003">Cell membrane</keyword>
<keyword id="KW-0472">Membrane</keyword>
<keyword id="KW-0812">Transmembrane</keyword>
<keyword id="KW-1133">Transmembrane helix</keyword>
<organism>
    <name type="scientific">Listeria monocytogenes serotype 4b (strain CLIP80459)</name>
    <dbReference type="NCBI Taxonomy" id="568819"/>
    <lineage>
        <taxon>Bacteria</taxon>
        <taxon>Bacillati</taxon>
        <taxon>Bacillota</taxon>
        <taxon>Bacilli</taxon>
        <taxon>Bacillales</taxon>
        <taxon>Listeriaceae</taxon>
        <taxon>Listeria</taxon>
    </lineage>
</organism>
<reference key="1">
    <citation type="journal article" date="2012" name="BMC Genomics">
        <title>Comparative genomics and transcriptomics of lineages I, II, and III strains of Listeria monocytogenes.</title>
        <authorList>
            <person name="Hain T."/>
            <person name="Ghai R."/>
            <person name="Billion A."/>
            <person name="Kuenne C.T."/>
            <person name="Steinweg C."/>
            <person name="Izar B."/>
            <person name="Mohamed W."/>
            <person name="Mraheil M."/>
            <person name="Domann E."/>
            <person name="Schaffrath S."/>
            <person name="Karst U."/>
            <person name="Goesmann A."/>
            <person name="Oehm S."/>
            <person name="Puhler A."/>
            <person name="Merkl R."/>
            <person name="Vorwerk S."/>
            <person name="Glaser P."/>
            <person name="Garrido P."/>
            <person name="Rusniok C."/>
            <person name="Buchrieser C."/>
            <person name="Goebel W."/>
            <person name="Chakraborty T."/>
        </authorList>
    </citation>
    <scope>NUCLEOTIDE SEQUENCE [LARGE SCALE GENOMIC DNA]</scope>
    <source>
        <strain>CLIP80459</strain>
    </source>
</reference>
<gene>
    <name type="ordered locus">Lm4b_01579</name>
</gene>
<accession>C1KVL5</accession>
<comment type="subcellular location">
    <subcellularLocation>
        <location evidence="1">Cell membrane</location>
        <topology evidence="1">Multi-pass membrane protein</topology>
    </subcellularLocation>
</comment>
<comment type="similarity">
    <text evidence="1">Belongs to the UPF0756 family.</text>
</comment>
<proteinExistence type="inferred from homology"/>
<sequence length="153" mass="16032">MFTESMLFLLLFLLLGLIAKNNSLIIAVAVVILLKLFHVDGKAMEMIQAKGINWGVTIITVAILIPIATGQIGFKDLIDSFKSAAGWIGLGAGIAVSILAKKGVGYMAVDPQVTVSLVFGTILAVVLFRGIAAGPVIAAGIAYMAMQLVAFIK</sequence>